<accession>Q2FVC5</accession>
<evidence type="ECO:0000255" key="1">
    <source>
        <dbReference type="PROSITE-ProRule" id="PRU00303"/>
    </source>
</evidence>
<evidence type="ECO:0000305" key="2"/>
<comment type="subcellular location">
    <subcellularLocation>
        <location evidence="1">Cell membrane</location>
        <topology evidence="1">Lipid-anchor</topology>
    </subcellularLocation>
</comment>
<comment type="similarity">
    <text evidence="2">Belongs to the staphylococcal tandem lipoprotein family.</text>
</comment>
<keyword id="KW-1003">Cell membrane</keyword>
<keyword id="KW-0449">Lipoprotein</keyword>
<keyword id="KW-0472">Membrane</keyword>
<keyword id="KW-0564">Palmitate</keyword>
<keyword id="KW-1185">Reference proteome</keyword>
<keyword id="KW-0732">Signal</keyword>
<feature type="signal peptide" evidence="1">
    <location>
        <begin position="1"/>
        <end position="22"/>
    </location>
</feature>
<feature type="chain" id="PRO_0000282090" description="Uncharacterized lipoprotein SAOUHSC_02788">
    <location>
        <begin position="23"/>
        <end position="261"/>
    </location>
</feature>
<feature type="lipid moiety-binding region" description="N-palmitoyl cysteine" evidence="1">
    <location>
        <position position="23"/>
    </location>
</feature>
<feature type="lipid moiety-binding region" description="S-diacylglycerol cysteine" evidence="1">
    <location>
        <position position="23"/>
    </location>
</feature>
<sequence length="261" mass="30325">MIHSKKLTLGICLVLLIILIGGCVIMTKTNGRNAQIKENFNKTLSVYLTKNLDDFYDKEGFRDQEFDKRDKGTWIIYSEMVIEPKGKNMESRGMVLYINRNTRTTKGNFIVTEITEDSKGYSRSKEKKYPVKMENNRIIPTKPIPDDKLKKEIENFKFFVQYGNFKDFKDYKNGDISYNPNVPSYSAKYQLNNDDYNVQQLRKRYHIPTKQAPELKLKGSGNLKGSSVGSKDLEFTFVENQEENIYFSDSVEFTPSEDDKS</sequence>
<protein>
    <recommendedName>
        <fullName>Uncharacterized lipoprotein SAOUHSC_02788</fullName>
    </recommendedName>
</protein>
<name>Y2788_STAA8</name>
<gene>
    <name type="ordered locus">SAOUHSC_02788</name>
</gene>
<proteinExistence type="inferred from homology"/>
<organism>
    <name type="scientific">Staphylococcus aureus (strain NCTC 8325 / PS 47)</name>
    <dbReference type="NCBI Taxonomy" id="93061"/>
    <lineage>
        <taxon>Bacteria</taxon>
        <taxon>Bacillati</taxon>
        <taxon>Bacillota</taxon>
        <taxon>Bacilli</taxon>
        <taxon>Bacillales</taxon>
        <taxon>Staphylococcaceae</taxon>
        <taxon>Staphylococcus</taxon>
    </lineage>
</organism>
<dbReference type="EMBL" id="CP000253">
    <property type="protein sequence ID" value="ABD31792.1"/>
    <property type="molecule type" value="Genomic_DNA"/>
</dbReference>
<dbReference type="RefSeq" id="WP_000581873.1">
    <property type="nucleotide sequence ID" value="NZ_LS483365.1"/>
</dbReference>
<dbReference type="RefSeq" id="YP_501248.1">
    <property type="nucleotide sequence ID" value="NC_007795.1"/>
</dbReference>
<dbReference type="SMR" id="Q2FVC5"/>
<dbReference type="STRING" id="93061.SAOUHSC_02788"/>
<dbReference type="GeneID" id="3921443"/>
<dbReference type="KEGG" id="sao:SAOUHSC_02788"/>
<dbReference type="PATRIC" id="fig|93061.5.peg.2521"/>
<dbReference type="HOGENOM" id="CLU_071589_0_0_9"/>
<dbReference type="OrthoDB" id="2189886at2"/>
<dbReference type="PRO" id="PR:Q2FVC5"/>
<dbReference type="Proteomes" id="UP000008816">
    <property type="component" value="Chromosome"/>
</dbReference>
<dbReference type="GO" id="GO:0005886">
    <property type="term" value="C:plasma membrane"/>
    <property type="evidence" value="ECO:0007669"/>
    <property type="project" value="UniProtKB-SubCell"/>
</dbReference>
<dbReference type="Gene3D" id="2.50.20.40">
    <property type="match status" value="1"/>
</dbReference>
<dbReference type="InterPro" id="IPR007595">
    <property type="entry name" value="Csa"/>
</dbReference>
<dbReference type="InterPro" id="IPR038641">
    <property type="entry name" value="Csa_sf"/>
</dbReference>
<dbReference type="NCBIfam" id="TIGR01742">
    <property type="entry name" value="SA_tandem_lipo"/>
    <property type="match status" value="1"/>
</dbReference>
<dbReference type="Pfam" id="PF04507">
    <property type="entry name" value="DUF576"/>
    <property type="match status" value="1"/>
</dbReference>
<dbReference type="PROSITE" id="PS51257">
    <property type="entry name" value="PROKAR_LIPOPROTEIN"/>
    <property type="match status" value="1"/>
</dbReference>
<reference key="1">
    <citation type="book" date="2006" name="Gram positive pathogens, 2nd edition">
        <title>The Staphylococcus aureus NCTC 8325 genome.</title>
        <editorList>
            <person name="Fischetti V."/>
            <person name="Novick R."/>
            <person name="Ferretti J."/>
            <person name="Portnoy D."/>
            <person name="Rood J."/>
        </editorList>
        <authorList>
            <person name="Gillaspy A.F."/>
            <person name="Worrell V."/>
            <person name="Orvis J."/>
            <person name="Roe B.A."/>
            <person name="Dyer D.W."/>
            <person name="Iandolo J.J."/>
        </authorList>
    </citation>
    <scope>NUCLEOTIDE SEQUENCE [LARGE SCALE GENOMIC DNA]</scope>
    <source>
        <strain>NCTC 8325 / PS 47</strain>
    </source>
</reference>